<reference key="1">
    <citation type="journal article" date="2003" name="Proc. Natl. Acad. Sci. U.S.A.">
        <title>Comparative sequencing of human and chimpanzee MHC class I regions unveils insertions/deletions as the major path to genomic divergence.</title>
        <authorList>
            <person name="Anzai T."/>
            <person name="Shiina T."/>
            <person name="Kimura N."/>
            <person name="Yanagiya K."/>
            <person name="Kohara S."/>
            <person name="Shigenari A."/>
            <person name="Yamagata T."/>
            <person name="Kulski J.K."/>
            <person name="Naruse T.K."/>
            <person name="Fujimori Y."/>
            <person name="Fukuzumi Y."/>
            <person name="Yamazaki M."/>
            <person name="Tashiro H."/>
            <person name="Iwamoto C."/>
            <person name="Umehara Y."/>
            <person name="Imanishi T."/>
            <person name="Meyer A."/>
            <person name="Ikeo K."/>
            <person name="Gojobori T."/>
            <person name="Bahram S."/>
            <person name="Inoko H."/>
        </authorList>
    </citation>
    <scope>NUCLEOTIDE SEQUENCE [LARGE SCALE GENOMIC DNA]</scope>
</reference>
<reference key="2">
    <citation type="journal article" date="2006" name="Genetics">
        <title>Rapid evolution of major histocompatibility complex class I genes in primates generates new disease alleles in humans via hitchhiking diversity.</title>
        <authorList>
            <person name="Shiina T."/>
            <person name="Ota M."/>
            <person name="Shimizu S."/>
            <person name="Katsuyama Y."/>
            <person name="Hashimoto N."/>
            <person name="Takasu M."/>
            <person name="Anzai T."/>
            <person name="Kulski J.K."/>
            <person name="Kikkawa E."/>
            <person name="Naruse T."/>
            <person name="Kimura N."/>
            <person name="Yanagiya K."/>
            <person name="Watanabe A."/>
            <person name="Hosomichi K."/>
            <person name="Kohara S."/>
            <person name="Iwamoto C."/>
            <person name="Umehara Y."/>
            <person name="Meyer A."/>
            <person name="Wanner V."/>
            <person name="Sano K."/>
            <person name="Macquin C."/>
            <person name="Ikeo K."/>
            <person name="Tokunaga K."/>
            <person name="Gojobori T."/>
            <person name="Inoko H."/>
            <person name="Bahram S."/>
        </authorList>
    </citation>
    <scope>NUCLEOTIDE SEQUENCE [LARGE SCALE GENOMIC DNA]</scope>
</reference>
<feature type="initiator methionine" description="Removed" evidence="1">
    <location>
        <position position="1"/>
    </location>
</feature>
<feature type="chain" id="PRO_0000239622" description="E3 ubiquitin-protein ligase PPP1R11">
    <location>
        <begin position="2"/>
        <end position="126"/>
    </location>
</feature>
<feature type="region of interest" description="Disordered" evidence="3">
    <location>
        <begin position="1"/>
        <end position="25"/>
    </location>
</feature>
<feature type="region of interest" description="Atypical RING finger domain 1" evidence="1">
    <location>
        <begin position="52"/>
        <end position="62"/>
    </location>
</feature>
<feature type="region of interest" description="Disordered" evidence="3">
    <location>
        <begin position="70"/>
        <end position="126"/>
    </location>
</feature>
<feature type="region of interest" description="Atypical RING finger domain 2" evidence="1">
    <location>
        <begin position="85"/>
        <end position="94"/>
    </location>
</feature>
<feature type="compositionally biased region" description="Low complexity" evidence="3">
    <location>
        <begin position="10"/>
        <end position="22"/>
    </location>
</feature>
<feature type="compositionally biased region" description="Basic residues" evidence="3">
    <location>
        <begin position="89"/>
        <end position="101"/>
    </location>
</feature>
<feature type="compositionally biased region" description="Pro residues" evidence="3">
    <location>
        <begin position="107"/>
        <end position="126"/>
    </location>
</feature>
<feature type="modified residue" description="N-acetylalanine" evidence="1">
    <location>
        <position position="2"/>
    </location>
</feature>
<feature type="modified residue" description="Phosphoserine" evidence="1">
    <location>
        <position position="73"/>
    </location>
</feature>
<feature type="modified residue" description="Phosphoserine" evidence="1">
    <location>
        <position position="74"/>
    </location>
</feature>
<feature type="modified residue" description="Phosphothreonine" evidence="1">
    <location>
        <position position="75"/>
    </location>
</feature>
<feature type="modified residue" description="Phosphoserine" evidence="1">
    <location>
        <position position="77"/>
    </location>
</feature>
<feature type="modified residue" description="Phosphothreonine" evidence="1">
    <location>
        <position position="109"/>
    </location>
</feature>
<dbReference type="EC" id="2.3.2.27"/>
<dbReference type="EMBL" id="BA000041">
    <property type="protein sequence ID" value="BAC78187.1"/>
    <property type="molecule type" value="Genomic_DNA"/>
</dbReference>
<dbReference type="EMBL" id="AB210195">
    <property type="protein sequence ID" value="BAE92810.1"/>
    <property type="molecule type" value="Genomic_DNA"/>
</dbReference>
<dbReference type="EMBL" id="AB210196">
    <property type="protein sequence ID" value="BAE92813.1"/>
    <property type="molecule type" value="Genomic_DNA"/>
</dbReference>
<dbReference type="RefSeq" id="NP_001065285.1">
    <property type="nucleotide sequence ID" value="NM_001071817.1"/>
</dbReference>
<dbReference type="RefSeq" id="XP_054541514.1">
    <property type="nucleotide sequence ID" value="XM_054685539.2"/>
</dbReference>
<dbReference type="SMR" id="Q7YR30"/>
<dbReference type="FunCoup" id="Q7YR30">
    <property type="interactions" value="1870"/>
</dbReference>
<dbReference type="STRING" id="9598.ENSPTRP00000084274"/>
<dbReference type="PaxDb" id="9598-ENSPTRP00000030557"/>
<dbReference type="Ensembl" id="ENSPTRT00000109690.1">
    <property type="protein sequence ID" value="ENSPTRP00000084274.1"/>
    <property type="gene ID" value="ENSPTRG00000042828.1"/>
</dbReference>
<dbReference type="GeneID" id="742158"/>
<dbReference type="KEGG" id="ptr:742158"/>
<dbReference type="CTD" id="6992"/>
<dbReference type="VGNC" id="VGNC:11182">
    <property type="gene designation" value="PPP1R11"/>
</dbReference>
<dbReference type="eggNOG" id="KOG4102">
    <property type="taxonomic scope" value="Eukaryota"/>
</dbReference>
<dbReference type="GeneTree" id="ENSGT00390000001153"/>
<dbReference type="HOGENOM" id="CLU_098333_6_2_1"/>
<dbReference type="InParanoid" id="Q7YR30"/>
<dbReference type="OMA" id="CILGHSR"/>
<dbReference type="OrthoDB" id="16418at9604"/>
<dbReference type="TreeFam" id="TF352541"/>
<dbReference type="UniPathway" id="UPA00143"/>
<dbReference type="Proteomes" id="UP000002277">
    <property type="component" value="Chromosome 6"/>
</dbReference>
<dbReference type="Bgee" id="ENSPTRG00000042828">
    <property type="expression patterns" value="Expressed in Brodmann (1909) area 10 and 21 other cell types or tissues"/>
</dbReference>
<dbReference type="GO" id="GO:0005634">
    <property type="term" value="C:nucleus"/>
    <property type="evidence" value="ECO:0000318"/>
    <property type="project" value="GO_Central"/>
</dbReference>
<dbReference type="GO" id="GO:0008157">
    <property type="term" value="F:protein phosphatase 1 binding"/>
    <property type="evidence" value="ECO:0000318"/>
    <property type="project" value="GO_Central"/>
</dbReference>
<dbReference type="GO" id="GO:0004865">
    <property type="term" value="F:protein serine/threonine phosphatase inhibitor activity"/>
    <property type="evidence" value="ECO:0000318"/>
    <property type="project" value="GO_Central"/>
</dbReference>
<dbReference type="GO" id="GO:0061630">
    <property type="term" value="F:ubiquitin protein ligase activity"/>
    <property type="evidence" value="ECO:0000250"/>
    <property type="project" value="UniProtKB"/>
</dbReference>
<dbReference type="GO" id="GO:0050830">
    <property type="term" value="P:defense response to Gram-positive bacterium"/>
    <property type="evidence" value="ECO:0000250"/>
    <property type="project" value="UniProtKB"/>
</dbReference>
<dbReference type="GO" id="GO:0001818">
    <property type="term" value="P:negative regulation of cytokine production"/>
    <property type="evidence" value="ECO:0000250"/>
    <property type="project" value="UniProtKB"/>
</dbReference>
<dbReference type="GO" id="GO:0016567">
    <property type="term" value="P:protein ubiquitination"/>
    <property type="evidence" value="ECO:0007669"/>
    <property type="project" value="UniProtKB-UniPathway"/>
</dbReference>
<dbReference type="GO" id="GO:0006511">
    <property type="term" value="P:ubiquitin-dependent protein catabolic process"/>
    <property type="evidence" value="ECO:0000250"/>
    <property type="project" value="UniProtKB"/>
</dbReference>
<dbReference type="InterPro" id="IPR011107">
    <property type="entry name" value="PPI_Ypi1"/>
</dbReference>
<dbReference type="PANTHER" id="PTHR20835:SF0">
    <property type="entry name" value="E3 UBIQUITIN-PROTEIN LIGASE PPP1R11"/>
    <property type="match status" value="1"/>
</dbReference>
<dbReference type="PANTHER" id="PTHR20835">
    <property type="entry name" value="E3 UBIQUITIN-PROTEIN LIGASE PPP1R11-RELATED"/>
    <property type="match status" value="1"/>
</dbReference>
<dbReference type="Pfam" id="PF07491">
    <property type="entry name" value="PPI_Ypi1"/>
    <property type="match status" value="1"/>
</dbReference>
<organism>
    <name type="scientific">Pan troglodytes</name>
    <name type="common">Chimpanzee</name>
    <dbReference type="NCBI Taxonomy" id="9598"/>
    <lineage>
        <taxon>Eukaryota</taxon>
        <taxon>Metazoa</taxon>
        <taxon>Chordata</taxon>
        <taxon>Craniata</taxon>
        <taxon>Vertebrata</taxon>
        <taxon>Euteleostomi</taxon>
        <taxon>Mammalia</taxon>
        <taxon>Eutheria</taxon>
        <taxon>Euarchontoglires</taxon>
        <taxon>Primates</taxon>
        <taxon>Haplorrhini</taxon>
        <taxon>Catarrhini</taxon>
        <taxon>Hominidae</taxon>
        <taxon>Pan</taxon>
    </lineage>
</organism>
<gene>
    <name type="primary">PPP1R11</name>
</gene>
<keyword id="KW-0007">Acetylation</keyword>
<keyword id="KW-0597">Phosphoprotein</keyword>
<keyword id="KW-0650">Protein phosphatase inhibitor</keyword>
<keyword id="KW-1185">Reference proteome</keyword>
<keyword id="KW-0808">Transferase</keyword>
<keyword id="KW-0832">Ubl conjugation</keyword>
<keyword id="KW-0833">Ubl conjugation pathway</keyword>
<name>PP1RB_PANTR</name>
<protein>
    <recommendedName>
        <fullName>E3 ubiquitin-protein ligase PPP1R11</fullName>
        <ecNumber>2.3.2.27</ecNumber>
    </recommendedName>
    <alternativeName>
        <fullName>Protein phosphatase 1 regulatory subunit 11</fullName>
    </alternativeName>
</protein>
<proteinExistence type="inferred from homology"/>
<evidence type="ECO:0000250" key="1">
    <source>
        <dbReference type="UniProtKB" id="O60927"/>
    </source>
</evidence>
<evidence type="ECO:0000250" key="2">
    <source>
        <dbReference type="UniProtKB" id="Q8K1L5"/>
    </source>
</evidence>
<evidence type="ECO:0000256" key="3">
    <source>
        <dbReference type="SAM" id="MobiDB-lite"/>
    </source>
</evidence>
<accession>Q7YR30</accession>
<sequence>MAEAGAGLSETVTETTVTVTTEPENRSLTIKLRKRKPEKKVEWTSDTVDNEHMGRRSSKCCCIYEKPRAFGESSTESDEEEEEGCGHTHCVRGHRKGRRRATLGPTPTTPPQPPDPSQPPPGPMQH</sequence>
<comment type="function">
    <text evidence="1">Atypical E3 ubiquitin-protein ligase which ubiquitinates TLR2 at 'Lys-754' leading to its degradation by the proteasome. Plays a role in regulating inflammatory cytokine release and gram-positive bacterial clearance by functioning, in part, through the ubiquitination and degradation of TLR2. Inhibitor of protein phosphatase 1.</text>
</comment>
<comment type="catalytic activity">
    <reaction evidence="1">
        <text>S-ubiquitinyl-[E2 ubiquitin-conjugating enzyme]-L-cysteine + [acceptor protein]-L-lysine = [E2 ubiquitin-conjugating enzyme]-L-cysteine + N(6)-ubiquitinyl-[acceptor protein]-L-lysine.</text>
        <dbReference type="EC" id="2.3.2.27"/>
    </reaction>
</comment>
<comment type="pathway">
    <text>Protein modification; protein ubiquitination.</text>
</comment>
<comment type="subunit">
    <text evidence="2">Interacts with TLR2 and UBE2D2.</text>
</comment>
<comment type="PTM">
    <text evidence="1">Auto-ubiquitinated.</text>
</comment>